<name>PDRP_RHILW</name>
<sequence>MENRTNFFHLHLISDSTGETLISAGRAASAQFRSAQPIEHVYPLIRNRKQLLPVLQAIDDAPGIVLYTIVDRELASLIDERCVEMGVASVNVLEPVMNAFQIYLGAPSRRRVGAQHVMNAGYFARIEALNFTMDHDDGQMPDDYNDADVVIIGISRTSKTPTSIYLANRGIKTANIPIVYGVPLPESLFTTTKPLIVCLIATTDRISQVRENRILGATHGFDREHYTDRAAISEELKYARSLCARHNWPLIDVTRRSIEETAAAIVALRPKLR</sequence>
<proteinExistence type="inferred from homology"/>
<accession>B5ZV51</accession>
<organism>
    <name type="scientific">Rhizobium leguminosarum bv. trifolii (strain WSM2304)</name>
    <dbReference type="NCBI Taxonomy" id="395492"/>
    <lineage>
        <taxon>Bacteria</taxon>
        <taxon>Pseudomonadati</taxon>
        <taxon>Pseudomonadota</taxon>
        <taxon>Alphaproteobacteria</taxon>
        <taxon>Hyphomicrobiales</taxon>
        <taxon>Rhizobiaceae</taxon>
        <taxon>Rhizobium/Agrobacterium group</taxon>
        <taxon>Rhizobium</taxon>
    </lineage>
</organism>
<keyword id="KW-0418">Kinase</keyword>
<keyword id="KW-0547">Nucleotide-binding</keyword>
<keyword id="KW-1185">Reference proteome</keyword>
<keyword id="KW-0723">Serine/threonine-protein kinase</keyword>
<keyword id="KW-0808">Transferase</keyword>
<dbReference type="EC" id="2.7.11.32" evidence="1"/>
<dbReference type="EC" id="2.7.4.27" evidence="1"/>
<dbReference type="EMBL" id="CP001191">
    <property type="protein sequence ID" value="ACI57197.1"/>
    <property type="molecule type" value="Genomic_DNA"/>
</dbReference>
<dbReference type="RefSeq" id="WP_003589532.1">
    <property type="nucleotide sequence ID" value="NC_011369.1"/>
</dbReference>
<dbReference type="SMR" id="B5ZV51"/>
<dbReference type="STRING" id="395492.Rleg2_3935"/>
<dbReference type="KEGG" id="rlt:Rleg2_3935"/>
<dbReference type="eggNOG" id="COG1806">
    <property type="taxonomic scope" value="Bacteria"/>
</dbReference>
<dbReference type="HOGENOM" id="CLU_046206_2_0_5"/>
<dbReference type="Proteomes" id="UP000008330">
    <property type="component" value="Chromosome"/>
</dbReference>
<dbReference type="GO" id="GO:0043531">
    <property type="term" value="F:ADP binding"/>
    <property type="evidence" value="ECO:0007669"/>
    <property type="project" value="UniProtKB-UniRule"/>
</dbReference>
<dbReference type="GO" id="GO:0005524">
    <property type="term" value="F:ATP binding"/>
    <property type="evidence" value="ECO:0007669"/>
    <property type="project" value="InterPro"/>
</dbReference>
<dbReference type="GO" id="GO:0016776">
    <property type="term" value="F:phosphotransferase activity, phosphate group as acceptor"/>
    <property type="evidence" value="ECO:0007669"/>
    <property type="project" value="UniProtKB-UniRule"/>
</dbReference>
<dbReference type="GO" id="GO:0004674">
    <property type="term" value="F:protein serine/threonine kinase activity"/>
    <property type="evidence" value="ECO:0007669"/>
    <property type="project" value="UniProtKB-UniRule"/>
</dbReference>
<dbReference type="HAMAP" id="MF_00921">
    <property type="entry name" value="PDRP"/>
    <property type="match status" value="1"/>
</dbReference>
<dbReference type="InterPro" id="IPR005177">
    <property type="entry name" value="Kinase-pyrophosphorylase"/>
</dbReference>
<dbReference type="InterPro" id="IPR026565">
    <property type="entry name" value="PPDK_reg"/>
</dbReference>
<dbReference type="NCBIfam" id="NF003742">
    <property type="entry name" value="PRK05339.1"/>
    <property type="match status" value="1"/>
</dbReference>
<dbReference type="PANTHER" id="PTHR31756">
    <property type="entry name" value="PYRUVATE, PHOSPHATE DIKINASE REGULATORY PROTEIN 1, CHLOROPLASTIC"/>
    <property type="match status" value="1"/>
</dbReference>
<dbReference type="PANTHER" id="PTHR31756:SF3">
    <property type="entry name" value="PYRUVATE, PHOSPHATE DIKINASE REGULATORY PROTEIN 1, CHLOROPLASTIC"/>
    <property type="match status" value="1"/>
</dbReference>
<dbReference type="Pfam" id="PF03618">
    <property type="entry name" value="Kinase-PPPase"/>
    <property type="match status" value="1"/>
</dbReference>
<evidence type="ECO:0000255" key="1">
    <source>
        <dbReference type="HAMAP-Rule" id="MF_00921"/>
    </source>
</evidence>
<gene>
    <name type="ordered locus">Rleg2_3935</name>
</gene>
<reference key="1">
    <citation type="journal article" date="2010" name="Stand. Genomic Sci.">
        <title>Complete genome sequence of Rhizobium leguminosarum bv trifolii strain WSM2304, an effective microsymbiont of the South American clover Trifolium polymorphum.</title>
        <authorList>
            <person name="Reeve W."/>
            <person name="O'Hara G."/>
            <person name="Chain P."/>
            <person name="Ardley J."/>
            <person name="Brau L."/>
            <person name="Nandesena K."/>
            <person name="Tiwari R."/>
            <person name="Malfatti S."/>
            <person name="Kiss H."/>
            <person name="Lapidus A."/>
            <person name="Copeland A."/>
            <person name="Nolan M."/>
            <person name="Land M."/>
            <person name="Ivanova N."/>
            <person name="Mavromatis K."/>
            <person name="Markowitz V."/>
            <person name="Kyrpides N."/>
            <person name="Melino V."/>
            <person name="Denton M."/>
            <person name="Yates R."/>
            <person name="Howieson J."/>
        </authorList>
    </citation>
    <scope>NUCLEOTIDE SEQUENCE [LARGE SCALE GENOMIC DNA]</scope>
    <source>
        <strain>WSM2304</strain>
    </source>
</reference>
<protein>
    <recommendedName>
        <fullName evidence="1">Putative pyruvate, phosphate dikinase regulatory protein</fullName>
        <shortName evidence="1">PPDK regulatory protein</shortName>
        <ecNumber evidence="1">2.7.11.32</ecNumber>
        <ecNumber evidence="1">2.7.4.27</ecNumber>
    </recommendedName>
</protein>
<comment type="function">
    <text evidence="1">Bifunctional serine/threonine kinase and phosphorylase involved in the regulation of the pyruvate, phosphate dikinase (PPDK) by catalyzing its phosphorylation/dephosphorylation.</text>
</comment>
<comment type="catalytic activity">
    <reaction evidence="1">
        <text>N(tele)-phospho-L-histidyl/L-threonyl-[pyruvate, phosphate dikinase] + ADP = N(tele)-phospho-L-histidyl/O-phospho-L-threonyl-[pyruvate, phosphate dikinase] + AMP + H(+)</text>
        <dbReference type="Rhea" id="RHEA:43692"/>
        <dbReference type="Rhea" id="RHEA-COMP:10650"/>
        <dbReference type="Rhea" id="RHEA-COMP:10651"/>
        <dbReference type="ChEBI" id="CHEBI:15378"/>
        <dbReference type="ChEBI" id="CHEBI:30013"/>
        <dbReference type="ChEBI" id="CHEBI:61977"/>
        <dbReference type="ChEBI" id="CHEBI:83586"/>
        <dbReference type="ChEBI" id="CHEBI:456215"/>
        <dbReference type="ChEBI" id="CHEBI:456216"/>
        <dbReference type="EC" id="2.7.11.32"/>
    </reaction>
</comment>
<comment type="catalytic activity">
    <reaction evidence="1">
        <text>N(tele)-phospho-L-histidyl/O-phospho-L-threonyl-[pyruvate, phosphate dikinase] + phosphate + H(+) = N(tele)-phospho-L-histidyl/L-threonyl-[pyruvate, phosphate dikinase] + diphosphate</text>
        <dbReference type="Rhea" id="RHEA:43696"/>
        <dbReference type="Rhea" id="RHEA-COMP:10650"/>
        <dbReference type="Rhea" id="RHEA-COMP:10651"/>
        <dbReference type="ChEBI" id="CHEBI:15378"/>
        <dbReference type="ChEBI" id="CHEBI:30013"/>
        <dbReference type="ChEBI" id="CHEBI:33019"/>
        <dbReference type="ChEBI" id="CHEBI:43474"/>
        <dbReference type="ChEBI" id="CHEBI:61977"/>
        <dbReference type="ChEBI" id="CHEBI:83586"/>
        <dbReference type="EC" id="2.7.4.27"/>
    </reaction>
</comment>
<comment type="similarity">
    <text evidence="1">Belongs to the pyruvate, phosphate/water dikinase regulatory protein family. PDRP subfamily.</text>
</comment>
<feature type="chain" id="PRO_1000136486" description="Putative pyruvate, phosphate dikinase regulatory protein">
    <location>
        <begin position="1"/>
        <end position="273"/>
    </location>
</feature>
<feature type="binding site" evidence="1">
    <location>
        <begin position="153"/>
        <end position="160"/>
    </location>
    <ligand>
        <name>ADP</name>
        <dbReference type="ChEBI" id="CHEBI:456216"/>
    </ligand>
</feature>